<protein>
    <recommendedName>
        <fullName evidence="1">DNA gyrase inhibitor YacG</fullName>
    </recommendedName>
</protein>
<name>YACG_VIBPA</name>
<reference key="1">
    <citation type="journal article" date="2003" name="Lancet">
        <title>Genome sequence of Vibrio parahaemolyticus: a pathogenic mechanism distinct from that of V. cholerae.</title>
        <authorList>
            <person name="Makino K."/>
            <person name="Oshima K."/>
            <person name="Kurokawa K."/>
            <person name="Yokoyama K."/>
            <person name="Uda T."/>
            <person name="Tagomori K."/>
            <person name="Iijima Y."/>
            <person name="Najima M."/>
            <person name="Nakano M."/>
            <person name="Yamashita A."/>
            <person name="Kubota Y."/>
            <person name="Kimura S."/>
            <person name="Yasunaga T."/>
            <person name="Honda T."/>
            <person name="Shinagawa H."/>
            <person name="Hattori M."/>
            <person name="Iida T."/>
        </authorList>
    </citation>
    <scope>NUCLEOTIDE SEQUENCE [LARGE SCALE GENOMIC DNA]</scope>
    <source>
        <strain>RIMD 2210633</strain>
    </source>
</reference>
<accession>Q87LT2</accession>
<comment type="function">
    <text evidence="1">Inhibits all the catalytic activities of DNA gyrase by preventing its interaction with DNA. Acts by binding directly to the C-terminal domain of GyrB, which probably disrupts DNA binding by the gyrase.</text>
</comment>
<comment type="cofactor">
    <cofactor evidence="1">
        <name>Zn(2+)</name>
        <dbReference type="ChEBI" id="CHEBI:29105"/>
    </cofactor>
    <text evidence="1">Binds 1 zinc ion.</text>
</comment>
<comment type="subunit">
    <text evidence="1">Interacts with GyrB.</text>
</comment>
<comment type="similarity">
    <text evidence="1">Belongs to the DNA gyrase inhibitor YacG family.</text>
</comment>
<dbReference type="EMBL" id="BA000031">
    <property type="protein sequence ID" value="BAC60792.1"/>
    <property type="molecule type" value="Genomic_DNA"/>
</dbReference>
<dbReference type="RefSeq" id="NP_798908.1">
    <property type="nucleotide sequence ID" value="NC_004603.1"/>
</dbReference>
<dbReference type="RefSeq" id="WP_005462546.1">
    <property type="nucleotide sequence ID" value="NC_004603.1"/>
</dbReference>
<dbReference type="SMR" id="Q87LT2"/>
<dbReference type="GeneID" id="1190044"/>
<dbReference type="KEGG" id="vpa:VP2529"/>
<dbReference type="PATRIC" id="fig|223926.6.peg.2426"/>
<dbReference type="eggNOG" id="COG3024">
    <property type="taxonomic scope" value="Bacteria"/>
</dbReference>
<dbReference type="HOGENOM" id="CLU_178280_3_1_6"/>
<dbReference type="Proteomes" id="UP000002493">
    <property type="component" value="Chromosome 1"/>
</dbReference>
<dbReference type="GO" id="GO:0008657">
    <property type="term" value="F:DNA topoisomerase type II (double strand cut, ATP-hydrolyzing) inhibitor activity"/>
    <property type="evidence" value="ECO:0007669"/>
    <property type="project" value="UniProtKB-UniRule"/>
</dbReference>
<dbReference type="GO" id="GO:0008270">
    <property type="term" value="F:zinc ion binding"/>
    <property type="evidence" value="ECO:0007669"/>
    <property type="project" value="UniProtKB-UniRule"/>
</dbReference>
<dbReference type="GO" id="GO:0006355">
    <property type="term" value="P:regulation of DNA-templated transcription"/>
    <property type="evidence" value="ECO:0007669"/>
    <property type="project" value="InterPro"/>
</dbReference>
<dbReference type="Gene3D" id="3.30.50.10">
    <property type="entry name" value="Erythroid Transcription Factor GATA-1, subunit A"/>
    <property type="match status" value="1"/>
</dbReference>
<dbReference type="HAMAP" id="MF_00649">
    <property type="entry name" value="DNA_gyrase_inhibitor_YacG"/>
    <property type="match status" value="1"/>
</dbReference>
<dbReference type="InterPro" id="IPR005584">
    <property type="entry name" value="DNA_gyrase_inhibitor_YacG"/>
</dbReference>
<dbReference type="InterPro" id="IPR013088">
    <property type="entry name" value="Znf_NHR/GATA"/>
</dbReference>
<dbReference type="NCBIfam" id="NF001638">
    <property type="entry name" value="PRK00418.1"/>
    <property type="match status" value="1"/>
</dbReference>
<dbReference type="PANTHER" id="PTHR36150">
    <property type="entry name" value="DNA GYRASE INHIBITOR YACG"/>
    <property type="match status" value="1"/>
</dbReference>
<dbReference type="PANTHER" id="PTHR36150:SF1">
    <property type="entry name" value="DNA GYRASE INHIBITOR YACG"/>
    <property type="match status" value="1"/>
</dbReference>
<dbReference type="Pfam" id="PF03884">
    <property type="entry name" value="YacG"/>
    <property type="match status" value="1"/>
</dbReference>
<dbReference type="SUPFAM" id="SSF57716">
    <property type="entry name" value="Glucocorticoid receptor-like (DNA-binding domain)"/>
    <property type="match status" value="1"/>
</dbReference>
<feature type="chain" id="PRO_0000211730" description="DNA gyrase inhibitor YacG">
    <location>
        <begin position="1"/>
        <end position="64"/>
    </location>
</feature>
<feature type="region of interest" description="Disordered" evidence="2">
    <location>
        <begin position="45"/>
        <end position="64"/>
    </location>
</feature>
<feature type="compositionally biased region" description="Acidic residues" evidence="2">
    <location>
        <begin position="54"/>
        <end position="64"/>
    </location>
</feature>
<feature type="binding site" evidence="1">
    <location>
        <position position="9"/>
    </location>
    <ligand>
        <name>Zn(2+)</name>
        <dbReference type="ChEBI" id="CHEBI:29105"/>
    </ligand>
</feature>
<feature type="binding site" evidence="1">
    <location>
        <position position="12"/>
    </location>
    <ligand>
        <name>Zn(2+)</name>
        <dbReference type="ChEBI" id="CHEBI:29105"/>
    </ligand>
</feature>
<feature type="binding site" evidence="1">
    <location>
        <position position="28"/>
    </location>
    <ligand>
        <name>Zn(2+)</name>
        <dbReference type="ChEBI" id="CHEBI:29105"/>
    </ligand>
</feature>
<feature type="binding site" evidence="1">
    <location>
        <position position="32"/>
    </location>
    <ligand>
        <name>Zn(2+)</name>
        <dbReference type="ChEBI" id="CHEBI:29105"/>
    </ligand>
</feature>
<proteinExistence type="inferred from homology"/>
<organism>
    <name type="scientific">Vibrio parahaemolyticus serotype O3:K6 (strain RIMD 2210633)</name>
    <dbReference type="NCBI Taxonomy" id="223926"/>
    <lineage>
        <taxon>Bacteria</taxon>
        <taxon>Pseudomonadati</taxon>
        <taxon>Pseudomonadota</taxon>
        <taxon>Gammaproteobacteria</taxon>
        <taxon>Vibrionales</taxon>
        <taxon>Vibrionaceae</taxon>
        <taxon>Vibrio</taxon>
    </lineage>
</organism>
<gene>
    <name evidence="1" type="primary">yacG</name>
    <name type="ordered locus">VP2529</name>
</gene>
<sequence length="64" mass="7187">MSKITIVQCPQCGTDVEWGEQSPHRPFCSKKCQMIDFGEWADEENAIAGAPDMSDSDGWSEDQY</sequence>
<keyword id="KW-0479">Metal-binding</keyword>
<keyword id="KW-0862">Zinc</keyword>
<evidence type="ECO:0000255" key="1">
    <source>
        <dbReference type="HAMAP-Rule" id="MF_00649"/>
    </source>
</evidence>
<evidence type="ECO:0000256" key="2">
    <source>
        <dbReference type="SAM" id="MobiDB-lite"/>
    </source>
</evidence>